<keyword id="KW-1185">Reference proteome</keyword>
<keyword id="KW-0833">Ubl conjugation pathway</keyword>
<gene>
    <name type="ordered locus">At1g01640</name>
    <name type="ORF">T1N6.2</name>
</gene>
<comment type="function">
    <text>May act as a substrate-specific adapter of an E3 ubiquitin-protein ligase complex (CUL3-RBX1-BTB) which mediates the ubiquitination and subsequent proteasomal degradation of target proteins.</text>
</comment>
<comment type="pathway">
    <text>Protein modification; protein ubiquitination.</text>
</comment>
<comment type="subunit">
    <text evidence="3">Interacts with CUL3A.</text>
</comment>
<comment type="domain">
    <text evidence="2">The BTB/POZ-like domain may mediate the interaction with some component of ubiquitin ligase complexes.</text>
</comment>
<accession>Q9LQ95</accession>
<accession>Q7XA69</accession>
<proteinExistence type="evidence at protein level"/>
<evidence type="ECO:0000255" key="1">
    <source>
        <dbReference type="PROSITE-ProRule" id="PRU00037"/>
    </source>
</evidence>
<evidence type="ECO:0000269" key="2">
    <source>
    </source>
</evidence>
<evidence type="ECO:0000269" key="3">
    <source>
    </source>
</evidence>
<evidence type="ECO:0000305" key="4"/>
<organism>
    <name type="scientific">Arabidopsis thaliana</name>
    <name type="common">Mouse-ear cress</name>
    <dbReference type="NCBI Taxonomy" id="3702"/>
    <lineage>
        <taxon>Eukaryota</taxon>
        <taxon>Viridiplantae</taxon>
        <taxon>Streptophyta</taxon>
        <taxon>Embryophyta</taxon>
        <taxon>Tracheophyta</taxon>
        <taxon>Spermatophyta</taxon>
        <taxon>Magnoliopsida</taxon>
        <taxon>eudicotyledons</taxon>
        <taxon>Gunneridae</taxon>
        <taxon>Pentapetalae</taxon>
        <taxon>rosids</taxon>
        <taxon>malvids</taxon>
        <taxon>Brassicales</taxon>
        <taxon>Brassicaceae</taxon>
        <taxon>Camelineae</taxon>
        <taxon>Arabidopsis</taxon>
    </lineage>
</organism>
<dbReference type="EMBL" id="AC009273">
    <property type="protein sequence ID" value="AAF78396.1"/>
    <property type="molecule type" value="Genomic_DNA"/>
</dbReference>
<dbReference type="EMBL" id="CP002684">
    <property type="protein sequence ID" value="AEE27315.1"/>
    <property type="molecule type" value="Genomic_DNA"/>
</dbReference>
<dbReference type="EMBL" id="BT010191">
    <property type="protein sequence ID" value="AAQ22660.1"/>
    <property type="molecule type" value="mRNA"/>
</dbReference>
<dbReference type="EMBL" id="AK229678">
    <property type="protein sequence ID" value="BAF01519.1"/>
    <property type="molecule type" value="mRNA"/>
</dbReference>
<dbReference type="PIR" id="C86147">
    <property type="entry name" value="C86147"/>
</dbReference>
<dbReference type="RefSeq" id="NP_171670.1">
    <property type="nucleotide sequence ID" value="NM_100046.4"/>
</dbReference>
<dbReference type="SMR" id="Q9LQ95"/>
<dbReference type="BioGRID" id="24769">
    <property type="interactions" value="3"/>
</dbReference>
<dbReference type="FunCoup" id="Q9LQ95">
    <property type="interactions" value="128"/>
</dbReference>
<dbReference type="IntAct" id="Q9LQ95">
    <property type="interactions" value="3"/>
</dbReference>
<dbReference type="STRING" id="3702.Q9LQ95"/>
<dbReference type="PaxDb" id="3702-AT1G01640.1"/>
<dbReference type="ProteomicsDB" id="242502"/>
<dbReference type="EnsemblPlants" id="AT1G01640.1">
    <property type="protein sequence ID" value="AT1G01640.1"/>
    <property type="gene ID" value="AT1G01640"/>
</dbReference>
<dbReference type="GeneID" id="839534"/>
<dbReference type="Gramene" id="AT1G01640.1">
    <property type="protein sequence ID" value="AT1G01640.1"/>
    <property type="gene ID" value="AT1G01640"/>
</dbReference>
<dbReference type="KEGG" id="ath:AT1G01640"/>
<dbReference type="Araport" id="AT1G01640"/>
<dbReference type="TAIR" id="AT1G01640"/>
<dbReference type="eggNOG" id="KOG1987">
    <property type="taxonomic scope" value="Eukaryota"/>
</dbReference>
<dbReference type="HOGENOM" id="CLU_004253_9_1_1"/>
<dbReference type="InParanoid" id="Q9LQ95"/>
<dbReference type="OMA" id="FKEQMHT"/>
<dbReference type="OrthoDB" id="6359943at2759"/>
<dbReference type="PhylomeDB" id="Q9LQ95"/>
<dbReference type="UniPathway" id="UPA00143"/>
<dbReference type="PRO" id="PR:Q9LQ95"/>
<dbReference type="Proteomes" id="UP000006548">
    <property type="component" value="Chromosome 1"/>
</dbReference>
<dbReference type="ExpressionAtlas" id="Q9LQ95">
    <property type="expression patterns" value="baseline and differential"/>
</dbReference>
<dbReference type="GO" id="GO:0016567">
    <property type="term" value="P:protein ubiquitination"/>
    <property type="evidence" value="ECO:0007669"/>
    <property type="project" value="UniProtKB-UniPathway"/>
</dbReference>
<dbReference type="CDD" id="cd14733">
    <property type="entry name" value="BACK"/>
    <property type="match status" value="1"/>
</dbReference>
<dbReference type="CDD" id="cd18186">
    <property type="entry name" value="BTB_POZ_ZBTB_KLHL-like"/>
    <property type="match status" value="1"/>
</dbReference>
<dbReference type="Gene3D" id="1.25.40.420">
    <property type="match status" value="1"/>
</dbReference>
<dbReference type="Gene3D" id="3.30.710.10">
    <property type="entry name" value="Potassium Channel Kv1.1, Chain A"/>
    <property type="match status" value="1"/>
</dbReference>
<dbReference type="InterPro" id="IPR044784">
    <property type="entry name" value="At1g01640-like"/>
</dbReference>
<dbReference type="InterPro" id="IPR000210">
    <property type="entry name" value="BTB/POZ_dom"/>
</dbReference>
<dbReference type="InterPro" id="IPR011333">
    <property type="entry name" value="SKP1/BTB/POZ_sf"/>
</dbReference>
<dbReference type="PANTHER" id="PTHR47274:SF4">
    <property type="entry name" value="BTB DOMAIN-CONTAINING PROTEIN"/>
    <property type="match status" value="1"/>
</dbReference>
<dbReference type="PANTHER" id="PTHR47274">
    <property type="entry name" value="BTB/POZ DOMAIN CONTAINING PROTEIN, EXPRESSED-RELATED"/>
    <property type="match status" value="1"/>
</dbReference>
<dbReference type="Pfam" id="PF00651">
    <property type="entry name" value="BTB"/>
    <property type="match status" value="1"/>
</dbReference>
<dbReference type="SMART" id="SM00225">
    <property type="entry name" value="BTB"/>
    <property type="match status" value="1"/>
</dbReference>
<dbReference type="SUPFAM" id="SSF54695">
    <property type="entry name" value="POZ domain"/>
    <property type="match status" value="1"/>
</dbReference>
<dbReference type="PROSITE" id="PS50097">
    <property type="entry name" value="BTB"/>
    <property type="match status" value="1"/>
</dbReference>
<reference key="1">
    <citation type="journal article" date="2000" name="Nature">
        <title>Sequence and analysis of chromosome 1 of the plant Arabidopsis thaliana.</title>
        <authorList>
            <person name="Theologis A."/>
            <person name="Ecker J.R."/>
            <person name="Palm C.J."/>
            <person name="Federspiel N.A."/>
            <person name="Kaul S."/>
            <person name="White O."/>
            <person name="Alonso J."/>
            <person name="Altafi H."/>
            <person name="Araujo R."/>
            <person name="Bowman C.L."/>
            <person name="Brooks S.Y."/>
            <person name="Buehler E."/>
            <person name="Chan A."/>
            <person name="Chao Q."/>
            <person name="Chen H."/>
            <person name="Cheuk R.F."/>
            <person name="Chin C.W."/>
            <person name="Chung M.K."/>
            <person name="Conn L."/>
            <person name="Conway A.B."/>
            <person name="Conway A.R."/>
            <person name="Creasy T.H."/>
            <person name="Dewar K."/>
            <person name="Dunn P."/>
            <person name="Etgu P."/>
            <person name="Feldblyum T.V."/>
            <person name="Feng J.-D."/>
            <person name="Fong B."/>
            <person name="Fujii C.Y."/>
            <person name="Gill J.E."/>
            <person name="Goldsmith A.D."/>
            <person name="Haas B."/>
            <person name="Hansen N.F."/>
            <person name="Hughes B."/>
            <person name="Huizar L."/>
            <person name="Hunter J.L."/>
            <person name="Jenkins J."/>
            <person name="Johnson-Hopson C."/>
            <person name="Khan S."/>
            <person name="Khaykin E."/>
            <person name="Kim C.J."/>
            <person name="Koo H.L."/>
            <person name="Kremenetskaia I."/>
            <person name="Kurtz D.B."/>
            <person name="Kwan A."/>
            <person name="Lam B."/>
            <person name="Langin-Hooper S."/>
            <person name="Lee A."/>
            <person name="Lee J.M."/>
            <person name="Lenz C.A."/>
            <person name="Li J.H."/>
            <person name="Li Y.-P."/>
            <person name="Lin X."/>
            <person name="Liu S.X."/>
            <person name="Liu Z.A."/>
            <person name="Luros J.S."/>
            <person name="Maiti R."/>
            <person name="Marziali A."/>
            <person name="Militscher J."/>
            <person name="Miranda M."/>
            <person name="Nguyen M."/>
            <person name="Nierman W.C."/>
            <person name="Osborne B.I."/>
            <person name="Pai G."/>
            <person name="Peterson J."/>
            <person name="Pham P.K."/>
            <person name="Rizzo M."/>
            <person name="Rooney T."/>
            <person name="Rowley D."/>
            <person name="Sakano H."/>
            <person name="Salzberg S.L."/>
            <person name="Schwartz J.R."/>
            <person name="Shinn P."/>
            <person name="Southwick A.M."/>
            <person name="Sun H."/>
            <person name="Tallon L.J."/>
            <person name="Tambunga G."/>
            <person name="Toriumi M.J."/>
            <person name="Town C.D."/>
            <person name="Utterback T."/>
            <person name="Van Aken S."/>
            <person name="Vaysberg M."/>
            <person name="Vysotskaia V.S."/>
            <person name="Walker M."/>
            <person name="Wu D."/>
            <person name="Yu G."/>
            <person name="Fraser C.M."/>
            <person name="Venter J.C."/>
            <person name="Davis R.W."/>
        </authorList>
    </citation>
    <scope>NUCLEOTIDE SEQUENCE [LARGE SCALE GENOMIC DNA]</scope>
    <source>
        <strain>cv. Columbia</strain>
    </source>
</reference>
<reference key="2">
    <citation type="journal article" date="2017" name="Plant J.">
        <title>Araport11: a complete reannotation of the Arabidopsis thaliana reference genome.</title>
        <authorList>
            <person name="Cheng C.Y."/>
            <person name="Krishnakumar V."/>
            <person name="Chan A.P."/>
            <person name="Thibaud-Nissen F."/>
            <person name="Schobel S."/>
            <person name="Town C.D."/>
        </authorList>
    </citation>
    <scope>GENOME REANNOTATION</scope>
    <source>
        <strain>cv. Columbia</strain>
    </source>
</reference>
<reference key="3">
    <citation type="journal article" date="2003" name="Science">
        <title>Empirical analysis of transcriptional activity in the Arabidopsis genome.</title>
        <authorList>
            <person name="Yamada K."/>
            <person name="Lim J."/>
            <person name="Dale J.M."/>
            <person name="Chen H."/>
            <person name="Shinn P."/>
            <person name="Palm C.J."/>
            <person name="Southwick A.M."/>
            <person name="Wu H.C."/>
            <person name="Kim C.J."/>
            <person name="Nguyen M."/>
            <person name="Pham P.K."/>
            <person name="Cheuk R.F."/>
            <person name="Karlin-Newmann G."/>
            <person name="Liu S.X."/>
            <person name="Lam B."/>
            <person name="Sakano H."/>
            <person name="Wu T."/>
            <person name="Yu G."/>
            <person name="Miranda M."/>
            <person name="Quach H.L."/>
            <person name="Tripp M."/>
            <person name="Chang C.H."/>
            <person name="Lee J.M."/>
            <person name="Toriumi M.J."/>
            <person name="Chan M.M."/>
            <person name="Tang C.C."/>
            <person name="Onodera C.S."/>
            <person name="Deng J.M."/>
            <person name="Akiyama K."/>
            <person name="Ansari Y."/>
            <person name="Arakawa T."/>
            <person name="Banh J."/>
            <person name="Banno F."/>
            <person name="Bowser L."/>
            <person name="Brooks S.Y."/>
            <person name="Carninci P."/>
            <person name="Chao Q."/>
            <person name="Choy N."/>
            <person name="Enju A."/>
            <person name="Goldsmith A.D."/>
            <person name="Gurjal M."/>
            <person name="Hansen N.F."/>
            <person name="Hayashizaki Y."/>
            <person name="Johnson-Hopson C."/>
            <person name="Hsuan V.W."/>
            <person name="Iida K."/>
            <person name="Karnes M."/>
            <person name="Khan S."/>
            <person name="Koesema E."/>
            <person name="Ishida J."/>
            <person name="Jiang P.X."/>
            <person name="Jones T."/>
            <person name="Kawai J."/>
            <person name="Kamiya A."/>
            <person name="Meyers C."/>
            <person name="Nakajima M."/>
            <person name="Narusaka M."/>
            <person name="Seki M."/>
            <person name="Sakurai T."/>
            <person name="Satou M."/>
            <person name="Tamse R."/>
            <person name="Vaysberg M."/>
            <person name="Wallender E.K."/>
            <person name="Wong C."/>
            <person name="Yamamura Y."/>
            <person name="Yuan S."/>
            <person name="Shinozaki K."/>
            <person name="Davis R.W."/>
            <person name="Theologis A."/>
            <person name="Ecker J.R."/>
        </authorList>
    </citation>
    <scope>NUCLEOTIDE SEQUENCE [LARGE SCALE MRNA]</scope>
    <source>
        <strain>cv. Columbia</strain>
    </source>
</reference>
<reference key="4">
    <citation type="submission" date="2006-07" db="EMBL/GenBank/DDBJ databases">
        <title>Large-scale analysis of RIKEN Arabidopsis full-length (RAFL) cDNAs.</title>
        <authorList>
            <person name="Totoki Y."/>
            <person name="Seki M."/>
            <person name="Ishida J."/>
            <person name="Nakajima M."/>
            <person name="Enju A."/>
            <person name="Kamiya A."/>
            <person name="Narusaka M."/>
            <person name="Shin-i T."/>
            <person name="Nakagawa M."/>
            <person name="Sakamoto N."/>
            <person name="Oishi K."/>
            <person name="Kohara Y."/>
            <person name="Kobayashi M."/>
            <person name="Toyoda A."/>
            <person name="Sakaki Y."/>
            <person name="Sakurai T."/>
            <person name="Iida K."/>
            <person name="Akiyama K."/>
            <person name="Satou M."/>
            <person name="Toyoda T."/>
            <person name="Konagaya A."/>
            <person name="Carninci P."/>
            <person name="Kawai J."/>
            <person name="Hayashizaki Y."/>
            <person name="Shinozaki K."/>
        </authorList>
    </citation>
    <scope>NUCLEOTIDE SEQUENCE [LARGE SCALE MRNA]</scope>
    <source>
        <strain>cv. Columbia</strain>
    </source>
</reference>
<reference key="5">
    <citation type="journal article" date="2005" name="J. Biol. Chem.">
        <title>Cullins 3a and 3b assemble with members of the broad complex/tramtrack/bric-a-brac (BTB) protein family to form essential ubiquitin-protein ligases (E3s) in Arabidopsis.</title>
        <authorList>
            <person name="Gingerich D.J."/>
            <person name="Gagne J.M."/>
            <person name="Salter D.W."/>
            <person name="Hellmann H."/>
            <person name="Estelle M."/>
            <person name="Ma L."/>
            <person name="Vierstra R.D."/>
        </authorList>
    </citation>
    <scope>DOMAIN BTB</scope>
</reference>
<reference key="6">
    <citation type="journal article" date="2005" name="Plant Cell">
        <title>Arabidopsis has two redundant Cullin3 proteins that are essential for embryo development and that interact with RBX1 and BTB proteins to form multisubunit E3 ubiquitin ligase complexes in vivo.</title>
        <authorList>
            <person name="Figueroa P."/>
            <person name="Gusmaroli G."/>
            <person name="Serino G."/>
            <person name="Habashi J."/>
            <person name="Ma L."/>
            <person name="Shen Y."/>
            <person name="Feng S."/>
            <person name="Bostick M."/>
            <person name="Callis J."/>
            <person name="Hellmann H."/>
            <person name="Deng X.W."/>
        </authorList>
    </citation>
    <scope>INTERACTION WITH CUL3A</scope>
</reference>
<name>Y1164_ARATH</name>
<sequence>MTEAEQKAAFLGGLVVSFKEQMHTDVLVKPGEEAPPIPTHKAVLAARSKVFRNMLDSDECKTSPEESITLPDLSHDELKSLLEFLYSGNLKAPYNQYRSLYLAADKYDISYLQDVCRNHFIASLSSRNVLDILELASIPCDTILKDAAINHIVKHMEEVVVPMKYETFVQRNPDLSVEITRAYLRETKAKAKDHGAPLNGNTRPRIW</sequence>
<protein>
    <recommendedName>
        <fullName>BTB/POZ domain-containing protein At1g01640</fullName>
    </recommendedName>
</protein>
<feature type="chain" id="PRO_0000405996" description="BTB/POZ domain-containing protein At1g01640">
    <location>
        <begin position="1"/>
        <end position="207"/>
    </location>
</feature>
<feature type="domain" description="BTB" evidence="1">
    <location>
        <begin position="24"/>
        <end position="94"/>
    </location>
</feature>
<feature type="sequence conflict" description="In Ref. 3; AAQ22660 and 4; BAF01519." evidence="4" ref="3 4">
    <original>K</original>
    <variation>R</variation>
    <location>
        <position position="79"/>
    </location>
</feature>